<gene>
    <name evidence="1" type="primary">iolD</name>
    <name type="ordered locus">GTNG_1810</name>
</gene>
<reference key="1">
    <citation type="journal article" date="2007" name="Proc. Natl. Acad. Sci. U.S.A.">
        <title>Genome and proteome of long-chain alkane degrading Geobacillus thermodenitrificans NG80-2 isolated from a deep-subsurface oil reservoir.</title>
        <authorList>
            <person name="Feng L."/>
            <person name="Wang W."/>
            <person name="Cheng J."/>
            <person name="Ren Y."/>
            <person name="Zhao G."/>
            <person name="Gao C."/>
            <person name="Tang Y."/>
            <person name="Liu X."/>
            <person name="Han W."/>
            <person name="Peng X."/>
            <person name="Liu R."/>
            <person name="Wang L."/>
        </authorList>
    </citation>
    <scope>NUCLEOTIDE SEQUENCE [LARGE SCALE GENOMIC DNA]</scope>
    <source>
        <strain>NG80-2</strain>
    </source>
</reference>
<comment type="function">
    <text evidence="1">Involved in the cleavage of the C1-C2 bond of 3D-(3,5/4)-trihydroxycyclohexane-1,2-dione (THcHDO) to yield 5-deoxy-glucuronate (5DG).</text>
</comment>
<comment type="catalytic activity">
    <reaction evidence="1">
        <text>3D-3,5/4-trihydroxycyclohexane-1,2-dione + H2O = 5-deoxy-D-glucuronate + H(+)</text>
        <dbReference type="Rhea" id="RHEA:25836"/>
        <dbReference type="ChEBI" id="CHEBI:15377"/>
        <dbReference type="ChEBI" id="CHEBI:15378"/>
        <dbReference type="ChEBI" id="CHEBI:28446"/>
        <dbReference type="ChEBI" id="CHEBI:58852"/>
        <dbReference type="EC" id="3.7.1.22"/>
    </reaction>
</comment>
<comment type="cofactor">
    <cofactor evidence="1">
        <name>Mg(2+)</name>
        <dbReference type="ChEBI" id="CHEBI:18420"/>
    </cofactor>
    <text evidence="1">Binds 1 Mg(2+) ion per subunit.</text>
</comment>
<comment type="cofactor">
    <cofactor evidence="1">
        <name>thiamine diphosphate</name>
        <dbReference type="ChEBI" id="CHEBI:58937"/>
    </cofactor>
    <text evidence="1">Binds 1 thiamine pyrophosphate per subunit.</text>
</comment>
<comment type="pathway">
    <text evidence="1">Polyol metabolism; myo-inositol degradation into acetyl-CoA; acetyl-CoA from myo-inositol: step 3/7.</text>
</comment>
<comment type="similarity">
    <text evidence="1">Belongs to the TPP enzyme family.</text>
</comment>
<sequence>MSTIRLTTAQALVKFLNNQYVEFDGKQQRFVKGIFTIFGHGNVLGLGQALEEDPGELEVYQGRNEQGMANAAIAFAKQKNRKQIMAATSSVGPGAANMVTSAATATANNIPVLLLPGDVFATRQPDPVLQQIEHTHDLSISTNDAFRAVSKYWDRVCRPEQLMSAMLNAMRVLTNPADTGAVTIALPQDVQGEAWDFPESFFAKRVHRIERRQPSLESVRDAVKLIRSKKKPLLVLGGGVRYSEAADAFVKFAEKFNIPFAETQAGKGTIESSHPLNLGGIGVTGNLAANTIAKQADLIIGVGTRFTDFTTASKQLFSSAEILTINVSEFHASKLDAVKVVADAKAGLEAIAEALGDYVSAYGNEISEAKQAWNRELERLCSVAYGENFTPEIAGHLDEKLPEYREAFGSELTQTGVIGKVNELIDDDAVIVGASGSLPGDLQRMWVCKDRNTYHMEYGYSCMGYEIAGAFGVKLAEPDKEVYAMVGDGSFLMLHSELVTSLQEGQKINIILFDNSGFGCINNLQMENGMGSFVTEFRKRNLETGQLDGPIMTIDYAKVAEGYGLKTYSVRTMEELETALIDSKKQSISTLIDIKVLPKTMTHGYGSWWHVGVAEVSTKESVQAAYRNKQENLKLARKY</sequence>
<name>IOLD_GEOTN</name>
<proteinExistence type="inferred from homology"/>
<evidence type="ECO:0000255" key="1">
    <source>
        <dbReference type="HAMAP-Rule" id="MF_01669"/>
    </source>
</evidence>
<protein>
    <recommendedName>
        <fullName evidence="1">3D-(3,5/4)-trihydroxycyclohexane-1,2-dione hydrolase</fullName>
        <shortName evidence="1">THcHDO hydrolase</shortName>
        <ecNumber evidence="1">3.7.1.22</ecNumber>
    </recommendedName>
</protein>
<dbReference type="EC" id="3.7.1.22" evidence="1"/>
<dbReference type="EMBL" id="CP000557">
    <property type="protein sequence ID" value="ABO67170.1"/>
    <property type="molecule type" value="Genomic_DNA"/>
</dbReference>
<dbReference type="RefSeq" id="WP_008880027.1">
    <property type="nucleotide sequence ID" value="NC_009328.1"/>
</dbReference>
<dbReference type="SMR" id="A4IPB6"/>
<dbReference type="KEGG" id="gtn:GTNG_1810"/>
<dbReference type="eggNOG" id="COG3962">
    <property type="taxonomic scope" value="Bacteria"/>
</dbReference>
<dbReference type="HOGENOM" id="CLU_013748_6_0_9"/>
<dbReference type="UniPathway" id="UPA00076">
    <property type="reaction ID" value="UER00145"/>
</dbReference>
<dbReference type="Proteomes" id="UP000001578">
    <property type="component" value="Chromosome"/>
</dbReference>
<dbReference type="GO" id="GO:0005948">
    <property type="term" value="C:acetolactate synthase complex"/>
    <property type="evidence" value="ECO:0007669"/>
    <property type="project" value="TreeGrafter"/>
</dbReference>
<dbReference type="GO" id="GO:0102481">
    <property type="term" value="F:3D-(3,5/4)-trihydroxycyclohexane-1,2-dione hydrolase activity"/>
    <property type="evidence" value="ECO:0007669"/>
    <property type="project" value="UniProtKB-EC"/>
</dbReference>
<dbReference type="GO" id="GO:0003984">
    <property type="term" value="F:acetolactate synthase activity"/>
    <property type="evidence" value="ECO:0007669"/>
    <property type="project" value="TreeGrafter"/>
</dbReference>
<dbReference type="GO" id="GO:0050660">
    <property type="term" value="F:flavin adenine dinucleotide binding"/>
    <property type="evidence" value="ECO:0007669"/>
    <property type="project" value="TreeGrafter"/>
</dbReference>
<dbReference type="GO" id="GO:0000287">
    <property type="term" value="F:magnesium ion binding"/>
    <property type="evidence" value="ECO:0007669"/>
    <property type="project" value="UniProtKB-UniRule"/>
</dbReference>
<dbReference type="GO" id="GO:0030976">
    <property type="term" value="F:thiamine pyrophosphate binding"/>
    <property type="evidence" value="ECO:0007669"/>
    <property type="project" value="UniProtKB-UniRule"/>
</dbReference>
<dbReference type="GO" id="GO:0019310">
    <property type="term" value="P:inositol catabolic process"/>
    <property type="evidence" value="ECO:0007669"/>
    <property type="project" value="UniProtKB-UniRule"/>
</dbReference>
<dbReference type="GO" id="GO:0009097">
    <property type="term" value="P:isoleucine biosynthetic process"/>
    <property type="evidence" value="ECO:0007669"/>
    <property type="project" value="TreeGrafter"/>
</dbReference>
<dbReference type="GO" id="GO:0009099">
    <property type="term" value="P:L-valine biosynthetic process"/>
    <property type="evidence" value="ECO:0007669"/>
    <property type="project" value="TreeGrafter"/>
</dbReference>
<dbReference type="CDD" id="cd02003">
    <property type="entry name" value="TPP_IolD"/>
    <property type="match status" value="1"/>
</dbReference>
<dbReference type="CDD" id="cd07035">
    <property type="entry name" value="TPP_PYR_POX_like"/>
    <property type="match status" value="1"/>
</dbReference>
<dbReference type="Gene3D" id="3.40.50.970">
    <property type="match status" value="2"/>
</dbReference>
<dbReference type="Gene3D" id="3.40.50.1220">
    <property type="entry name" value="TPP-binding domain"/>
    <property type="match status" value="1"/>
</dbReference>
<dbReference type="HAMAP" id="MF_01669">
    <property type="entry name" value="IolD"/>
    <property type="match status" value="1"/>
</dbReference>
<dbReference type="InterPro" id="IPR029035">
    <property type="entry name" value="DHS-like_NAD/FAD-binding_dom"/>
</dbReference>
<dbReference type="InterPro" id="IPR030817">
    <property type="entry name" value="Myo_inos_IolD"/>
</dbReference>
<dbReference type="InterPro" id="IPR023757">
    <property type="entry name" value="THcHDO_hydrolase_firmi"/>
</dbReference>
<dbReference type="InterPro" id="IPR029061">
    <property type="entry name" value="THDP-binding"/>
</dbReference>
<dbReference type="InterPro" id="IPR012000">
    <property type="entry name" value="Thiamin_PyroP_enz_cen_dom"/>
</dbReference>
<dbReference type="InterPro" id="IPR012001">
    <property type="entry name" value="Thiamin_PyroP_enz_TPP-bd_dom"/>
</dbReference>
<dbReference type="InterPro" id="IPR000399">
    <property type="entry name" value="TPP-bd_CS"/>
</dbReference>
<dbReference type="InterPro" id="IPR045229">
    <property type="entry name" value="TPP_enz"/>
</dbReference>
<dbReference type="InterPro" id="IPR011766">
    <property type="entry name" value="TPP_enzyme_TPP-bd"/>
</dbReference>
<dbReference type="NCBIfam" id="TIGR04377">
    <property type="entry name" value="myo_inos_iolD"/>
    <property type="match status" value="1"/>
</dbReference>
<dbReference type="PANTHER" id="PTHR18968:SF9">
    <property type="entry name" value="3D-(3,5_4)-TRIHYDROXYCYCLOHEXANE-1,2-DIONE HYDROLASE"/>
    <property type="match status" value="1"/>
</dbReference>
<dbReference type="PANTHER" id="PTHR18968">
    <property type="entry name" value="THIAMINE PYROPHOSPHATE ENZYMES"/>
    <property type="match status" value="1"/>
</dbReference>
<dbReference type="Pfam" id="PF02775">
    <property type="entry name" value="TPP_enzyme_C"/>
    <property type="match status" value="1"/>
</dbReference>
<dbReference type="Pfam" id="PF00205">
    <property type="entry name" value="TPP_enzyme_M"/>
    <property type="match status" value="1"/>
</dbReference>
<dbReference type="Pfam" id="PF02776">
    <property type="entry name" value="TPP_enzyme_N"/>
    <property type="match status" value="1"/>
</dbReference>
<dbReference type="SUPFAM" id="SSF52467">
    <property type="entry name" value="DHS-like NAD/FAD-binding domain"/>
    <property type="match status" value="1"/>
</dbReference>
<dbReference type="SUPFAM" id="SSF52518">
    <property type="entry name" value="Thiamin diphosphate-binding fold (THDP-binding)"/>
    <property type="match status" value="2"/>
</dbReference>
<dbReference type="PROSITE" id="PS00187">
    <property type="entry name" value="TPP_ENZYMES"/>
    <property type="match status" value="1"/>
</dbReference>
<feature type="chain" id="PRO_0000352543" description="3D-(3,5/4)-trihydroxycyclohexane-1,2-dione hydrolase">
    <location>
        <begin position="1"/>
        <end position="639"/>
    </location>
</feature>
<feature type="region of interest" description="Thiamine pyrophosphate binding" evidence="1">
    <location>
        <begin position="437"/>
        <end position="517"/>
    </location>
</feature>
<feature type="binding site" evidence="1">
    <location>
        <position position="65"/>
    </location>
    <ligand>
        <name>thiamine diphosphate</name>
        <dbReference type="ChEBI" id="CHEBI:58937"/>
    </ligand>
</feature>
<feature type="binding site" evidence="1">
    <location>
        <position position="488"/>
    </location>
    <ligand>
        <name>Mg(2+)</name>
        <dbReference type="ChEBI" id="CHEBI:18420"/>
    </ligand>
</feature>
<feature type="binding site" evidence="1">
    <location>
        <position position="515"/>
    </location>
    <ligand>
        <name>Mg(2+)</name>
        <dbReference type="ChEBI" id="CHEBI:18420"/>
    </ligand>
</feature>
<organism>
    <name type="scientific">Geobacillus thermodenitrificans (strain NG80-2)</name>
    <dbReference type="NCBI Taxonomy" id="420246"/>
    <lineage>
        <taxon>Bacteria</taxon>
        <taxon>Bacillati</taxon>
        <taxon>Bacillota</taxon>
        <taxon>Bacilli</taxon>
        <taxon>Bacillales</taxon>
        <taxon>Anoxybacillaceae</taxon>
        <taxon>Geobacillus</taxon>
    </lineage>
</organism>
<keyword id="KW-0378">Hydrolase</keyword>
<keyword id="KW-0460">Magnesium</keyword>
<keyword id="KW-0479">Metal-binding</keyword>
<keyword id="KW-0520">NAD</keyword>
<keyword id="KW-0786">Thiamine pyrophosphate</keyword>
<accession>A4IPB6</accession>